<comment type="subunit">
    <text evidence="1">Homodimer and heterodimers.</text>
</comment>
<comment type="subcellular location">
    <subcellularLocation>
        <location evidence="1">Cell membrane</location>
        <topology evidence="1">Multi-pass membrane protein</topology>
    </subcellularLocation>
</comment>
<comment type="similarity">
    <text evidence="3">Belongs to the Casparian strip membrane proteins (CASP) family.</text>
</comment>
<accession>A7PTY8</accession>
<accession>A5ASN8</accession>
<accession>F6HQ14</accession>
<feature type="chain" id="PRO_0000370307" description="CASP-like protein 1E1">
    <location>
        <begin position="1"/>
        <end position="202"/>
    </location>
</feature>
<feature type="topological domain" description="Cytoplasmic" evidence="2">
    <location>
        <begin position="1"/>
        <end position="33"/>
    </location>
</feature>
<feature type="transmembrane region" description="Helical" evidence="2">
    <location>
        <begin position="34"/>
        <end position="54"/>
    </location>
</feature>
<feature type="topological domain" description="Extracellular" evidence="2">
    <location>
        <begin position="55"/>
        <end position="85"/>
    </location>
</feature>
<feature type="transmembrane region" description="Helical" evidence="2">
    <location>
        <begin position="86"/>
        <end position="106"/>
    </location>
</feature>
<feature type="topological domain" description="Cytoplasmic" evidence="2">
    <location>
        <begin position="107"/>
        <end position="118"/>
    </location>
</feature>
<feature type="transmembrane region" description="Helical" evidence="2">
    <location>
        <begin position="119"/>
        <end position="139"/>
    </location>
</feature>
<feature type="topological domain" description="Extracellular" evidence="2">
    <location>
        <begin position="140"/>
        <end position="172"/>
    </location>
</feature>
<feature type="transmembrane region" description="Helical" evidence="2">
    <location>
        <begin position="173"/>
        <end position="193"/>
    </location>
</feature>
<feature type="topological domain" description="Cytoplasmic" evidence="2">
    <location>
        <begin position="194"/>
        <end position="202"/>
    </location>
</feature>
<feature type="sequence conflict" description="In Ref. 2; CAN69352." evidence="3" ref="2">
    <original>E</original>
    <variation>G</variation>
    <location>
        <position position="24"/>
    </location>
</feature>
<gene>
    <name type="ordered locus">VIT_07s0104g01350</name>
    <name type="ORF">GSVIVT00023588001</name>
    <name type="ORF">GSVIVT01010992001</name>
    <name type="ORF">VIT_00010992001</name>
    <name type="ORF">VITISV_023954</name>
    <name type="ORF">Vv07s0104g01350</name>
</gene>
<organism>
    <name type="scientific">Vitis vinifera</name>
    <name type="common">Grape</name>
    <dbReference type="NCBI Taxonomy" id="29760"/>
    <lineage>
        <taxon>Eukaryota</taxon>
        <taxon>Viridiplantae</taxon>
        <taxon>Streptophyta</taxon>
        <taxon>Embryophyta</taxon>
        <taxon>Tracheophyta</taxon>
        <taxon>Spermatophyta</taxon>
        <taxon>Magnoliopsida</taxon>
        <taxon>eudicotyledons</taxon>
        <taxon>Gunneridae</taxon>
        <taxon>Pentapetalae</taxon>
        <taxon>rosids</taxon>
        <taxon>Vitales</taxon>
        <taxon>Vitaceae</taxon>
        <taxon>Viteae</taxon>
        <taxon>Vitis</taxon>
    </lineage>
</organism>
<dbReference type="EMBL" id="FN596005">
    <property type="protein sequence ID" value="CCB56770.1"/>
    <property type="molecule type" value="Genomic_DNA"/>
</dbReference>
<dbReference type="EMBL" id="FN597025">
    <property type="status" value="NOT_ANNOTATED_CDS"/>
    <property type="molecule type" value="Genomic_DNA"/>
</dbReference>
<dbReference type="EMBL" id="AM434020">
    <property type="protein sequence ID" value="CAN69352.1"/>
    <property type="molecule type" value="Genomic_DNA"/>
</dbReference>
<dbReference type="EMBL" id="DV220385">
    <property type="status" value="NOT_ANNOTATED_CDS"/>
    <property type="molecule type" value="mRNA"/>
</dbReference>
<dbReference type="RefSeq" id="XP_002268702.1">
    <property type="nucleotide sequence ID" value="XM_002268666.3"/>
</dbReference>
<dbReference type="SMR" id="A7PTY8"/>
<dbReference type="STRING" id="29760.A7PTY8"/>
<dbReference type="PaxDb" id="29760-VIT_07s0104g01350.t01"/>
<dbReference type="EnsemblPlants" id="Vitvi07g00251_t001">
    <property type="protein sequence ID" value="Vitvi07g00251_P001"/>
    <property type="gene ID" value="Vitvi07g00251"/>
</dbReference>
<dbReference type="Gramene" id="Vitvi07g00251_t001">
    <property type="protein sequence ID" value="Vitvi07g00251_P001"/>
    <property type="gene ID" value="Vitvi07g00251"/>
</dbReference>
<dbReference type="eggNOG" id="ENOG502S1WM">
    <property type="taxonomic scope" value="Eukaryota"/>
</dbReference>
<dbReference type="HOGENOM" id="CLU_066104_1_1_1"/>
<dbReference type="InParanoid" id="A7PTY8"/>
<dbReference type="OrthoDB" id="1898688at2759"/>
<dbReference type="Proteomes" id="UP000009183">
    <property type="component" value="Chromosome 7"/>
</dbReference>
<dbReference type="GO" id="GO:0005886">
    <property type="term" value="C:plasma membrane"/>
    <property type="evidence" value="ECO:0000318"/>
    <property type="project" value="GO_Central"/>
</dbReference>
<dbReference type="InterPro" id="IPR006459">
    <property type="entry name" value="CASP/CASPL"/>
</dbReference>
<dbReference type="InterPro" id="IPR006702">
    <property type="entry name" value="CASP_dom"/>
</dbReference>
<dbReference type="InterPro" id="IPR044173">
    <property type="entry name" value="CASPL"/>
</dbReference>
<dbReference type="NCBIfam" id="TIGR01569">
    <property type="entry name" value="A_tha_TIGR01569"/>
    <property type="match status" value="1"/>
</dbReference>
<dbReference type="PANTHER" id="PTHR36488">
    <property type="entry name" value="CASP-LIKE PROTEIN 1U1"/>
    <property type="match status" value="1"/>
</dbReference>
<dbReference type="PANTHER" id="PTHR36488:SF8">
    <property type="entry name" value="CASP-LIKE PROTEIN 1U1"/>
    <property type="match status" value="1"/>
</dbReference>
<dbReference type="Pfam" id="PF04535">
    <property type="entry name" value="CASP_dom"/>
    <property type="match status" value="1"/>
</dbReference>
<sequence>MESQCRPNVDGVHNGVESHVKVVEKPRSVGSSSEFVLRILGLLLTLIAAVVAGVDKQTKIIPLTLIKTLPSLHVPVTAKWSDMSAFVYLVVSNAIACSYAAISLVLVTMLGRRGKGGRVLAVIVLDLHMVGLLFSANGAATAVGVLGQYGNSHVEWKKVCNVFDSFCHHLVASLALSFLGSLSFLGLVLLAILNLHKKSSTK</sequence>
<reference key="1">
    <citation type="journal article" date="2007" name="Nature">
        <title>The grapevine genome sequence suggests ancestral hexaploidization in major angiosperm phyla.</title>
        <authorList>
            <person name="Jaillon O."/>
            <person name="Aury J.-M."/>
            <person name="Noel B."/>
            <person name="Policriti A."/>
            <person name="Clepet C."/>
            <person name="Casagrande A."/>
            <person name="Choisne N."/>
            <person name="Aubourg S."/>
            <person name="Vitulo N."/>
            <person name="Jubin C."/>
            <person name="Vezzi A."/>
            <person name="Legeai F."/>
            <person name="Hugueney P."/>
            <person name="Dasilva C."/>
            <person name="Horner D."/>
            <person name="Mica E."/>
            <person name="Jublot D."/>
            <person name="Poulain J."/>
            <person name="Bruyere C."/>
            <person name="Billault A."/>
            <person name="Segurens B."/>
            <person name="Gouyvenoux M."/>
            <person name="Ugarte E."/>
            <person name="Cattonaro F."/>
            <person name="Anthouard V."/>
            <person name="Vico V."/>
            <person name="Del Fabbro C."/>
            <person name="Alaux M."/>
            <person name="Di Gaspero G."/>
            <person name="Dumas V."/>
            <person name="Felice N."/>
            <person name="Paillard S."/>
            <person name="Juman I."/>
            <person name="Moroldo M."/>
            <person name="Scalabrin S."/>
            <person name="Canaguier A."/>
            <person name="Le Clainche I."/>
            <person name="Malacrida G."/>
            <person name="Durand E."/>
            <person name="Pesole G."/>
            <person name="Laucou V."/>
            <person name="Chatelet P."/>
            <person name="Merdinoglu D."/>
            <person name="Delledonne M."/>
            <person name="Pezzotti M."/>
            <person name="Lecharny A."/>
            <person name="Scarpelli C."/>
            <person name="Artiguenave F."/>
            <person name="Pe M.E."/>
            <person name="Valle G."/>
            <person name="Morgante M."/>
            <person name="Caboche M."/>
            <person name="Adam-Blondon A.-F."/>
            <person name="Weissenbach J."/>
            <person name="Quetier F."/>
            <person name="Wincker P."/>
        </authorList>
    </citation>
    <scope>NUCLEOTIDE SEQUENCE [LARGE SCALE GENOMIC DNA]</scope>
    <source>
        <strain>cv. Pinot noir / PN40024</strain>
    </source>
</reference>
<reference key="2">
    <citation type="journal article" date="2007" name="PLoS ONE">
        <title>A high quality draft consensus sequence of the genome of a heterozygous grapevine variety.</title>
        <authorList>
            <person name="Velasco R."/>
            <person name="Zharkikh A."/>
            <person name="Troggio M."/>
            <person name="Cartwright D.A."/>
            <person name="Cestaro A."/>
            <person name="Pruss D."/>
            <person name="Pindo M."/>
            <person name="FitzGerald L.M."/>
            <person name="Vezzulli S."/>
            <person name="Reid J."/>
            <person name="Malacarne G."/>
            <person name="Iliev D."/>
            <person name="Coppola G."/>
            <person name="Wardell B."/>
            <person name="Micheletti D."/>
            <person name="Macalma T."/>
            <person name="Facci M."/>
            <person name="Mitchell J.T."/>
            <person name="Perazzolli M."/>
            <person name="Eldredge G."/>
            <person name="Gatto P."/>
            <person name="Oyzerski R."/>
            <person name="Moretto M."/>
            <person name="Gutin N."/>
            <person name="Stefanini M."/>
            <person name="Chen Y."/>
            <person name="Segala C."/>
            <person name="Davenport C."/>
            <person name="Dematte L."/>
            <person name="Mraz A."/>
            <person name="Battilana J."/>
            <person name="Stormo K."/>
            <person name="Costa F."/>
            <person name="Tao Q."/>
            <person name="Si-Ammour A."/>
            <person name="Harkins T."/>
            <person name="Lackey A."/>
            <person name="Perbost C."/>
            <person name="Taillon B."/>
            <person name="Stella A."/>
            <person name="Solovyev V."/>
            <person name="Fawcett J.A."/>
            <person name="Sterck L."/>
            <person name="Vandepoele K."/>
            <person name="Grando S.M."/>
            <person name="Toppo S."/>
            <person name="Moser C."/>
            <person name="Lanchbury J."/>
            <person name="Bogden R."/>
            <person name="Skolnick M."/>
            <person name="Sgaramella V."/>
            <person name="Bhatnagar S.K."/>
            <person name="Fontana P."/>
            <person name="Gutin A."/>
            <person name="Van de Peer Y."/>
            <person name="Salamini F."/>
            <person name="Viola R."/>
        </authorList>
    </citation>
    <scope>NUCLEOTIDE SEQUENCE [LARGE SCALE GENOMIC DNA]</scope>
    <source>
        <strain>cv. Pinot noir</strain>
    </source>
</reference>
<reference key="3">
    <citation type="submission" date="2005-10" db="EMBL/GenBank/DDBJ databases">
        <title>Expressed sequence tags from the grapevine cultivar Cabernet Sauvignon.</title>
        <authorList>
            <person name="Iocco P."/>
            <person name="Hua C."/>
            <person name="Davies C."/>
            <person name="Thomas M.R."/>
        </authorList>
    </citation>
    <scope>NUCLEOTIDE SEQUENCE [LARGE SCALE MRNA]</scope>
    <source>
        <strain>cv. Cabernet Sauvignon</strain>
        <tissue>Flower</tissue>
    </source>
</reference>
<reference key="4">
    <citation type="journal article" date="2014" name="Plant Physiol.">
        <title>Functional and evolutionary analysis of the CASPARIAN STRIP MEMBRANE DOMAIN PROTEIN family.</title>
        <authorList>
            <person name="Roppolo D."/>
            <person name="Boeckmann B."/>
            <person name="Pfister A."/>
            <person name="Boutet E."/>
            <person name="Rubio M.C."/>
            <person name="Denervaud-Tendon V."/>
            <person name="Vermeer J.E."/>
            <person name="Gheyselinck J."/>
            <person name="Xenarios I."/>
            <person name="Geldner N."/>
        </authorList>
    </citation>
    <scope>GENE FAMILY</scope>
    <scope>NOMENCLATURE</scope>
</reference>
<evidence type="ECO:0000250" key="1"/>
<evidence type="ECO:0000255" key="2"/>
<evidence type="ECO:0000305" key="3"/>
<protein>
    <recommendedName>
        <fullName>CASP-like protein 1E1</fullName>
        <shortName>VvCASPL1E1</shortName>
    </recommendedName>
</protein>
<name>CSPL8_VITVI</name>
<proteinExistence type="evidence at transcript level"/>
<keyword id="KW-1003">Cell membrane</keyword>
<keyword id="KW-0472">Membrane</keyword>
<keyword id="KW-1185">Reference proteome</keyword>
<keyword id="KW-0812">Transmembrane</keyword>
<keyword id="KW-1133">Transmembrane helix</keyword>